<organism>
    <name type="scientific">Bacillus subtilis (strain 168)</name>
    <dbReference type="NCBI Taxonomy" id="224308"/>
    <lineage>
        <taxon>Bacteria</taxon>
        <taxon>Bacillati</taxon>
        <taxon>Bacillota</taxon>
        <taxon>Bacilli</taxon>
        <taxon>Bacillales</taxon>
        <taxon>Bacillaceae</taxon>
        <taxon>Bacillus</taxon>
    </lineage>
</organism>
<keyword id="KW-0029">Amino-acid transport</keyword>
<keyword id="KW-1003">Cell membrane</keyword>
<keyword id="KW-0472">Membrane</keyword>
<keyword id="KW-1185">Reference proteome</keyword>
<keyword id="KW-0346">Stress response</keyword>
<keyword id="KW-0812">Transmembrane</keyword>
<keyword id="KW-1133">Transmembrane helix</keyword>
<keyword id="KW-0813">Transport</keyword>
<proteinExistence type="evidence at protein level"/>
<dbReference type="EMBL" id="U92466">
    <property type="protein sequence ID" value="AAB66512.1"/>
    <property type="molecule type" value="Genomic_DNA"/>
</dbReference>
<dbReference type="EMBL" id="AF011545">
    <property type="protein sequence ID" value="AAB72182.1"/>
    <property type="molecule type" value="Genomic_DNA"/>
</dbReference>
<dbReference type="EMBL" id="AL009126">
    <property type="protein sequence ID" value="CAB12486.1"/>
    <property type="molecule type" value="Genomic_DNA"/>
</dbReference>
<dbReference type="PIR" id="H69670">
    <property type="entry name" value="H69670"/>
</dbReference>
<dbReference type="RefSeq" id="NP_388548.1">
    <property type="nucleotide sequence ID" value="NC_000964.3"/>
</dbReference>
<dbReference type="RefSeq" id="WP_003242814.1">
    <property type="nucleotide sequence ID" value="NZ_OZ025638.1"/>
</dbReference>
<dbReference type="SMR" id="O06493"/>
<dbReference type="FunCoup" id="O06493">
    <property type="interactions" value="330"/>
</dbReference>
<dbReference type="STRING" id="224308.BSU06660"/>
<dbReference type="PaxDb" id="224308-BSU06660"/>
<dbReference type="EnsemblBacteria" id="CAB12486">
    <property type="protein sequence ID" value="CAB12486"/>
    <property type="gene ID" value="BSU_06660"/>
</dbReference>
<dbReference type="GeneID" id="939439"/>
<dbReference type="KEGG" id="bsu:BSU06660"/>
<dbReference type="PATRIC" id="fig|224308.179.peg.724"/>
<dbReference type="eggNOG" id="COG0591">
    <property type="taxonomic scope" value="Bacteria"/>
</dbReference>
<dbReference type="InParanoid" id="O06493"/>
<dbReference type="OrthoDB" id="9810181at2"/>
<dbReference type="PhylomeDB" id="O06493"/>
<dbReference type="BioCyc" id="BSUB:BSU06660-MONOMER"/>
<dbReference type="SABIO-RK" id="O06493"/>
<dbReference type="Proteomes" id="UP000001570">
    <property type="component" value="Chromosome"/>
</dbReference>
<dbReference type="GO" id="GO:0005886">
    <property type="term" value="C:plasma membrane"/>
    <property type="evidence" value="ECO:0000318"/>
    <property type="project" value="GO_Central"/>
</dbReference>
<dbReference type="GO" id="GO:0015193">
    <property type="term" value="F:L-proline transmembrane transporter activity"/>
    <property type="evidence" value="ECO:0000318"/>
    <property type="project" value="GO_Central"/>
</dbReference>
<dbReference type="GO" id="GO:0005298">
    <property type="term" value="F:proline:sodium symporter activity"/>
    <property type="evidence" value="ECO:0000318"/>
    <property type="project" value="GO_Central"/>
</dbReference>
<dbReference type="GO" id="GO:0031402">
    <property type="term" value="F:sodium ion binding"/>
    <property type="evidence" value="ECO:0007669"/>
    <property type="project" value="InterPro"/>
</dbReference>
<dbReference type="GO" id="GO:0015824">
    <property type="term" value="P:proline transport"/>
    <property type="evidence" value="ECO:0000318"/>
    <property type="project" value="GO_Central"/>
</dbReference>
<dbReference type="GO" id="GO:0055085">
    <property type="term" value="P:transmembrane transport"/>
    <property type="evidence" value="ECO:0000318"/>
    <property type="project" value="GO_Central"/>
</dbReference>
<dbReference type="CDD" id="cd11475">
    <property type="entry name" value="SLC5sbd_PutP"/>
    <property type="match status" value="1"/>
</dbReference>
<dbReference type="FunFam" id="1.20.1730.10:FF:000002">
    <property type="entry name" value="Sodium/proline symporter"/>
    <property type="match status" value="1"/>
</dbReference>
<dbReference type="Gene3D" id="1.20.1730.10">
    <property type="entry name" value="Sodium/glucose cotransporter"/>
    <property type="match status" value="1"/>
</dbReference>
<dbReference type="InterPro" id="IPR038377">
    <property type="entry name" value="Na/Glc_symporter_sf"/>
</dbReference>
<dbReference type="InterPro" id="IPR011851">
    <property type="entry name" value="Na/Pro_symporter"/>
</dbReference>
<dbReference type="InterPro" id="IPR001734">
    <property type="entry name" value="Na/solute_symporter"/>
</dbReference>
<dbReference type="InterPro" id="IPR018212">
    <property type="entry name" value="Na/solute_symporter_CS"/>
</dbReference>
<dbReference type="InterPro" id="IPR050277">
    <property type="entry name" value="Sodium:Solute_Symporter"/>
</dbReference>
<dbReference type="NCBIfam" id="TIGR02121">
    <property type="entry name" value="Na_Pro_sym"/>
    <property type="match status" value="1"/>
</dbReference>
<dbReference type="NCBIfam" id="TIGR00813">
    <property type="entry name" value="sss"/>
    <property type="match status" value="1"/>
</dbReference>
<dbReference type="PANTHER" id="PTHR48086:SF1">
    <property type="entry name" value="OSMOREGULATED PROLINE TRANSPORTER OPUE"/>
    <property type="match status" value="1"/>
</dbReference>
<dbReference type="PANTHER" id="PTHR48086">
    <property type="entry name" value="SODIUM/PROLINE SYMPORTER-RELATED"/>
    <property type="match status" value="1"/>
</dbReference>
<dbReference type="Pfam" id="PF00474">
    <property type="entry name" value="SSF"/>
    <property type="match status" value="1"/>
</dbReference>
<dbReference type="PROSITE" id="PS00456">
    <property type="entry name" value="NA_SOLUT_SYMP_1"/>
    <property type="match status" value="1"/>
</dbReference>
<dbReference type="PROSITE" id="PS00457">
    <property type="entry name" value="NA_SOLUT_SYMP_2"/>
    <property type="match status" value="1"/>
</dbReference>
<dbReference type="PROSITE" id="PS50283">
    <property type="entry name" value="NA_SOLUT_SYMP_3"/>
    <property type="match status" value="1"/>
</dbReference>
<feature type="chain" id="PRO_0000105404" description="Osmoregulated proline transporter OpuE">
    <location>
        <begin position="1"/>
        <end position="492"/>
    </location>
</feature>
<feature type="transmembrane region" description="Helical" evidence="1">
    <location>
        <begin position="3"/>
        <end position="23"/>
    </location>
</feature>
<feature type="transmembrane region" description="Helical" evidence="1">
    <location>
        <begin position="40"/>
        <end position="60"/>
    </location>
</feature>
<feature type="transmembrane region" description="Helical" evidence="1">
    <location>
        <begin position="62"/>
        <end position="82"/>
    </location>
</feature>
<feature type="transmembrane region" description="Helical" evidence="1">
    <location>
        <begin position="125"/>
        <end position="145"/>
    </location>
</feature>
<feature type="transmembrane region" description="Helical" evidence="1">
    <location>
        <begin position="161"/>
        <end position="181"/>
    </location>
</feature>
<feature type="transmembrane region" description="Helical" evidence="1">
    <location>
        <begin position="190"/>
        <end position="210"/>
    </location>
</feature>
<feature type="transmembrane region" description="Helical" evidence="1">
    <location>
        <begin position="224"/>
        <end position="244"/>
    </location>
</feature>
<feature type="transmembrane region" description="Helical" evidence="1">
    <location>
        <begin position="271"/>
        <end position="291"/>
    </location>
</feature>
<feature type="transmembrane region" description="Helical" evidence="1">
    <location>
        <begin position="314"/>
        <end position="334"/>
    </location>
</feature>
<feature type="transmembrane region" description="Helical" evidence="1">
    <location>
        <begin position="365"/>
        <end position="385"/>
    </location>
</feature>
<feature type="transmembrane region" description="Helical" evidence="1">
    <location>
        <begin position="394"/>
        <end position="414"/>
    </location>
</feature>
<feature type="transmembrane region" description="Helical" evidence="1">
    <location>
        <begin position="424"/>
        <end position="444"/>
    </location>
</feature>
<feature type="transmembrane region" description="Helical" evidence="1">
    <location>
        <begin position="449"/>
        <end position="469"/>
    </location>
</feature>
<name>OPUE_BACSU</name>
<sequence>MSIEIIISLGIYFIAMLLIGWYAFKKTTDINDYMLGGRGLGPFVTALSAGAADMSGWMLMGVPGAMFATGLSTLWLALGLTIGAYSNYLLLAPRLRAYTEAADDAITIPDFFDKRFQHSSSLLKIVSALIIMIFFTLYTSSGMVSGGRLFESAFGADYKLGLFLTTAVVVLYTLFGGFLAVSLTDFVQGAIMFAALVLVPIVAFTHVGGVAPTFHEIDAVNPHLLDIFKGASVISIISYLAWGLGYYGQPHIIVRFMAIKDIKDLKPARRIGMSWMIITVLGSVLTGLIGVAYAHKFGVAVKDPEMIFIIFSKILFHPLITGFLLSAILAAIMSSISSQLLVTASAVTEDLYRSFFRRKASDKELVMIGRLSVLVIAVIAVLLSLNPNSTILDLVGYAWAGFGSAFGPAILLSLYWKRMNEWGALAAMIVGAATVLIWITTGLAKSTGVYEIIPGFILSMIAGIIVSMITKRPAKASYRLFGVMEKLLKRKK</sequence>
<protein>
    <recommendedName>
        <fullName evidence="5">Osmoregulated proline transporter OpuE</fullName>
    </recommendedName>
    <alternativeName>
        <fullName evidence="4">Osmoprotectant uptake</fullName>
    </alternativeName>
    <alternativeName>
        <fullName evidence="4">Proline uptake system</fullName>
    </alternativeName>
</protein>
<gene>
    <name evidence="4" type="primary">opuE</name>
    <name type="synonym">yerK</name>
    <name type="ordered locus">BSU06660</name>
</gene>
<accession>O06493</accession>
<comment type="function">
    <text evidence="2 3">Catalyzes the uptake of extracellular proline under high-osmolarity growth conditions. Essential for the use of proline present in the environment as an osmoprotectant.</text>
</comment>
<comment type="catalytic activity">
    <reaction evidence="6 7">
        <text>L-proline(in) + Na(+)(in) = L-proline(out) + Na(+)(out)</text>
        <dbReference type="Rhea" id="RHEA:28967"/>
        <dbReference type="ChEBI" id="CHEBI:29101"/>
        <dbReference type="ChEBI" id="CHEBI:60039"/>
    </reaction>
</comment>
<comment type="biophysicochemical properties">
    <kinetics>
        <KM evidence="3">12 uM for proline</KM>
        <Vmax evidence="3">27.0 nmol/min/mg enzyme</Vmax>
        <Vmax evidence="3">19.0 nmol/min/mg enzyme (in the presence of 1 mM proline)</Vmax>
        <Vmax evidence="3">104.0 nmol/min/mg enzyme (in the presence of 0.4 M NaCl)</Vmax>
        <Vmax evidence="3">252.0 nmol/min/mg enzyme (in the presence of 0.6 M NaCl)</Vmax>
    </kinetics>
</comment>
<comment type="subcellular location">
    <subcellularLocation>
        <location evidence="5">Cell membrane</location>
        <topology evidence="1">Multi-pass membrane protein</topology>
    </subcellularLocation>
</comment>
<comment type="induction">
    <text evidence="2">Induced under high-osmolarity growth conditions. Has two osmoregulated and tightly spaced promoters. The first promoter is sigma A-dependent and the second promoter is controlled by the general stress transcription factor sigma B.</text>
</comment>
<comment type="disruption phenotype">
    <text evidence="2">Disruption of the gene eliminates the osmotically stimulated proline transport activity and practically abolishes the ability to use proline as an osmoprotectant.</text>
</comment>
<comment type="similarity">
    <text evidence="5">Belongs to the sodium:solute symporter (SSF) (TC 2.A.21) family.</text>
</comment>
<evidence type="ECO:0000255" key="1"/>
<evidence type="ECO:0000269" key="2">
    <source>
    </source>
</evidence>
<evidence type="ECO:0000269" key="3">
    <source>
    </source>
</evidence>
<evidence type="ECO:0000303" key="4">
    <source>
    </source>
</evidence>
<evidence type="ECO:0000305" key="5"/>
<evidence type="ECO:0000305" key="6">
    <source>
    </source>
</evidence>
<evidence type="ECO:0000305" key="7">
    <source>
    </source>
</evidence>
<reference key="1">
    <citation type="journal article" date="1997" name="Mol. Microbiol.">
        <title>Osmostress response in Bacillus subtilis: characterization of a proline uptake system (OpuE) regulated by high osmolarity and the alternative transcription factor sigma B.</title>
        <authorList>
            <person name="von Blohn C."/>
            <person name="Kempf B."/>
            <person name="Kappes R.M."/>
            <person name="Bremer E."/>
        </authorList>
    </citation>
    <scope>NUCLEOTIDE SEQUENCE [GENOMIC DNA]</scope>
    <scope>FUNCTION</scope>
    <scope>INDUCTION</scope>
    <scope>DISRUPTION PHENOTYPE</scope>
    <source>
        <strain>168 / JH642</strain>
    </source>
</reference>
<reference key="2">
    <citation type="journal article" date="1996" name="Microbiology">
        <title>The 52 degrees-55 degrees segment of the Bacillus subtilis chromosome: a region devoted to purine uptake and metabolism, and containing the genes cotA, gabP and guaA and the pur gene cluster within a 34960 bp nucleotide sequence.</title>
        <authorList>
            <person name="Borriss R."/>
            <person name="Porwollik S."/>
            <person name="Schroeter R."/>
        </authorList>
    </citation>
    <scope>NUCLEOTIDE SEQUENCE [GENOMIC DNA]</scope>
    <source>
        <strain>168</strain>
    </source>
</reference>
<reference key="3">
    <citation type="journal article" date="1997" name="Nature">
        <title>The complete genome sequence of the Gram-positive bacterium Bacillus subtilis.</title>
        <authorList>
            <person name="Kunst F."/>
            <person name="Ogasawara N."/>
            <person name="Moszer I."/>
            <person name="Albertini A.M."/>
            <person name="Alloni G."/>
            <person name="Azevedo V."/>
            <person name="Bertero M.G."/>
            <person name="Bessieres P."/>
            <person name="Bolotin A."/>
            <person name="Borchert S."/>
            <person name="Borriss R."/>
            <person name="Boursier L."/>
            <person name="Brans A."/>
            <person name="Braun M."/>
            <person name="Brignell S.C."/>
            <person name="Bron S."/>
            <person name="Brouillet S."/>
            <person name="Bruschi C.V."/>
            <person name="Caldwell B."/>
            <person name="Capuano V."/>
            <person name="Carter N.M."/>
            <person name="Choi S.-K."/>
            <person name="Codani J.-J."/>
            <person name="Connerton I.F."/>
            <person name="Cummings N.J."/>
            <person name="Daniel R.A."/>
            <person name="Denizot F."/>
            <person name="Devine K.M."/>
            <person name="Duesterhoeft A."/>
            <person name="Ehrlich S.D."/>
            <person name="Emmerson P.T."/>
            <person name="Entian K.-D."/>
            <person name="Errington J."/>
            <person name="Fabret C."/>
            <person name="Ferrari E."/>
            <person name="Foulger D."/>
            <person name="Fritz C."/>
            <person name="Fujita M."/>
            <person name="Fujita Y."/>
            <person name="Fuma S."/>
            <person name="Galizzi A."/>
            <person name="Galleron N."/>
            <person name="Ghim S.-Y."/>
            <person name="Glaser P."/>
            <person name="Goffeau A."/>
            <person name="Golightly E.J."/>
            <person name="Grandi G."/>
            <person name="Guiseppi G."/>
            <person name="Guy B.J."/>
            <person name="Haga K."/>
            <person name="Haiech J."/>
            <person name="Harwood C.R."/>
            <person name="Henaut A."/>
            <person name="Hilbert H."/>
            <person name="Holsappel S."/>
            <person name="Hosono S."/>
            <person name="Hullo M.-F."/>
            <person name="Itaya M."/>
            <person name="Jones L.-M."/>
            <person name="Joris B."/>
            <person name="Karamata D."/>
            <person name="Kasahara Y."/>
            <person name="Klaerr-Blanchard M."/>
            <person name="Klein C."/>
            <person name="Kobayashi Y."/>
            <person name="Koetter P."/>
            <person name="Koningstein G."/>
            <person name="Krogh S."/>
            <person name="Kumano M."/>
            <person name="Kurita K."/>
            <person name="Lapidus A."/>
            <person name="Lardinois S."/>
            <person name="Lauber J."/>
            <person name="Lazarevic V."/>
            <person name="Lee S.-M."/>
            <person name="Levine A."/>
            <person name="Liu H."/>
            <person name="Masuda S."/>
            <person name="Mauel C."/>
            <person name="Medigue C."/>
            <person name="Medina N."/>
            <person name="Mellado R.P."/>
            <person name="Mizuno M."/>
            <person name="Moestl D."/>
            <person name="Nakai S."/>
            <person name="Noback M."/>
            <person name="Noone D."/>
            <person name="O'Reilly M."/>
            <person name="Ogawa K."/>
            <person name="Ogiwara A."/>
            <person name="Oudega B."/>
            <person name="Park S.-H."/>
            <person name="Parro V."/>
            <person name="Pohl T.M."/>
            <person name="Portetelle D."/>
            <person name="Porwollik S."/>
            <person name="Prescott A.M."/>
            <person name="Presecan E."/>
            <person name="Pujic P."/>
            <person name="Purnelle B."/>
            <person name="Rapoport G."/>
            <person name="Rey M."/>
            <person name="Reynolds S."/>
            <person name="Rieger M."/>
            <person name="Rivolta C."/>
            <person name="Rocha E."/>
            <person name="Roche B."/>
            <person name="Rose M."/>
            <person name="Sadaie Y."/>
            <person name="Sato T."/>
            <person name="Scanlan E."/>
            <person name="Schleich S."/>
            <person name="Schroeter R."/>
            <person name="Scoffone F."/>
            <person name="Sekiguchi J."/>
            <person name="Sekowska A."/>
            <person name="Seror S.J."/>
            <person name="Serror P."/>
            <person name="Shin B.-S."/>
            <person name="Soldo B."/>
            <person name="Sorokin A."/>
            <person name="Tacconi E."/>
            <person name="Takagi T."/>
            <person name="Takahashi H."/>
            <person name="Takemaru K."/>
            <person name="Takeuchi M."/>
            <person name="Tamakoshi A."/>
            <person name="Tanaka T."/>
            <person name="Terpstra P."/>
            <person name="Tognoni A."/>
            <person name="Tosato V."/>
            <person name="Uchiyama S."/>
            <person name="Vandenbol M."/>
            <person name="Vannier F."/>
            <person name="Vassarotti A."/>
            <person name="Viari A."/>
            <person name="Wambutt R."/>
            <person name="Wedler E."/>
            <person name="Wedler H."/>
            <person name="Weitzenegger T."/>
            <person name="Winters P."/>
            <person name="Wipat A."/>
            <person name="Yamamoto H."/>
            <person name="Yamane K."/>
            <person name="Yasumoto K."/>
            <person name="Yata K."/>
            <person name="Yoshida K."/>
            <person name="Yoshikawa H.-F."/>
            <person name="Zumstein E."/>
            <person name="Yoshikawa H."/>
            <person name="Danchin A."/>
        </authorList>
    </citation>
    <scope>NUCLEOTIDE SEQUENCE [LARGE SCALE GENOMIC DNA]</scope>
    <source>
        <strain>168</strain>
    </source>
</reference>
<reference key="4">
    <citation type="journal article" date="2012" name="J. Bacteriol.">
        <title>Proline utilization by Bacillus subtilis: uptake and catabolism.</title>
        <authorList>
            <person name="Moses S."/>
            <person name="Sinner T."/>
            <person name="Zaprasis A."/>
            <person name="Stoeveken N."/>
            <person name="Hoffmann T."/>
            <person name="Belitsky B.R."/>
            <person name="Sonenshein A.L."/>
            <person name="Bremer E."/>
        </authorList>
    </citation>
    <scope>FUNCTION</scope>
    <scope>BIOPHYSICOCHEMICAL PROPERTIES</scope>
    <source>
        <strain>168 / JH642</strain>
    </source>
</reference>